<gene>
    <name evidence="1" type="primary">uvrC</name>
    <name type="ordered locus">SeD_A1297</name>
</gene>
<keyword id="KW-0963">Cytoplasm</keyword>
<keyword id="KW-0227">DNA damage</keyword>
<keyword id="KW-0228">DNA excision</keyword>
<keyword id="KW-0234">DNA repair</keyword>
<keyword id="KW-0267">Excision nuclease</keyword>
<keyword id="KW-0742">SOS response</keyword>
<accession>B5FRY5</accession>
<dbReference type="EMBL" id="CP001144">
    <property type="protein sequence ID" value="ACH76254.1"/>
    <property type="molecule type" value="Genomic_DNA"/>
</dbReference>
<dbReference type="RefSeq" id="WP_001289477.1">
    <property type="nucleotide sequence ID" value="NC_011205.1"/>
</dbReference>
<dbReference type="SMR" id="B5FRY5"/>
<dbReference type="KEGG" id="sed:SeD_A1297"/>
<dbReference type="HOGENOM" id="CLU_014841_3_0_6"/>
<dbReference type="Proteomes" id="UP000008322">
    <property type="component" value="Chromosome"/>
</dbReference>
<dbReference type="GO" id="GO:0005737">
    <property type="term" value="C:cytoplasm"/>
    <property type="evidence" value="ECO:0007669"/>
    <property type="project" value="UniProtKB-SubCell"/>
</dbReference>
<dbReference type="GO" id="GO:0009380">
    <property type="term" value="C:excinuclease repair complex"/>
    <property type="evidence" value="ECO:0007669"/>
    <property type="project" value="InterPro"/>
</dbReference>
<dbReference type="GO" id="GO:0003677">
    <property type="term" value="F:DNA binding"/>
    <property type="evidence" value="ECO:0007669"/>
    <property type="project" value="UniProtKB-UniRule"/>
</dbReference>
<dbReference type="GO" id="GO:0009381">
    <property type="term" value="F:excinuclease ABC activity"/>
    <property type="evidence" value="ECO:0007669"/>
    <property type="project" value="UniProtKB-UniRule"/>
</dbReference>
<dbReference type="GO" id="GO:0006289">
    <property type="term" value="P:nucleotide-excision repair"/>
    <property type="evidence" value="ECO:0007669"/>
    <property type="project" value="UniProtKB-UniRule"/>
</dbReference>
<dbReference type="GO" id="GO:0009432">
    <property type="term" value="P:SOS response"/>
    <property type="evidence" value="ECO:0007669"/>
    <property type="project" value="UniProtKB-UniRule"/>
</dbReference>
<dbReference type="CDD" id="cd10434">
    <property type="entry name" value="GIY-YIG_UvrC_Cho"/>
    <property type="match status" value="1"/>
</dbReference>
<dbReference type="FunFam" id="1.10.150.20:FF:000005">
    <property type="entry name" value="UvrABC system protein C"/>
    <property type="match status" value="1"/>
</dbReference>
<dbReference type="FunFam" id="3.30.420.340:FF:000001">
    <property type="entry name" value="UvrABC system protein C"/>
    <property type="match status" value="1"/>
</dbReference>
<dbReference type="FunFam" id="3.40.1440.10:FF:000001">
    <property type="entry name" value="UvrABC system protein C"/>
    <property type="match status" value="1"/>
</dbReference>
<dbReference type="FunFam" id="4.10.860.10:FF:000002">
    <property type="entry name" value="UvrABC system protein C"/>
    <property type="match status" value="1"/>
</dbReference>
<dbReference type="Gene3D" id="1.10.150.20">
    <property type="entry name" value="5' to 3' exonuclease, C-terminal subdomain"/>
    <property type="match status" value="1"/>
</dbReference>
<dbReference type="Gene3D" id="3.40.1440.10">
    <property type="entry name" value="GIY-YIG endonuclease"/>
    <property type="match status" value="1"/>
</dbReference>
<dbReference type="Gene3D" id="4.10.860.10">
    <property type="entry name" value="UVR domain"/>
    <property type="match status" value="1"/>
</dbReference>
<dbReference type="Gene3D" id="3.30.420.340">
    <property type="entry name" value="UvrC, RNAse H endonuclease domain"/>
    <property type="match status" value="1"/>
</dbReference>
<dbReference type="HAMAP" id="MF_00203">
    <property type="entry name" value="UvrC"/>
    <property type="match status" value="1"/>
</dbReference>
<dbReference type="InterPro" id="IPR000305">
    <property type="entry name" value="GIY-YIG_endonuc"/>
</dbReference>
<dbReference type="InterPro" id="IPR035901">
    <property type="entry name" value="GIY-YIG_endonuc_sf"/>
</dbReference>
<dbReference type="InterPro" id="IPR047296">
    <property type="entry name" value="GIY-YIG_UvrC_Cho"/>
</dbReference>
<dbReference type="InterPro" id="IPR003583">
    <property type="entry name" value="Hlx-hairpin-Hlx_DNA-bd_motif"/>
</dbReference>
<dbReference type="InterPro" id="IPR010994">
    <property type="entry name" value="RuvA_2-like"/>
</dbReference>
<dbReference type="InterPro" id="IPR001943">
    <property type="entry name" value="UVR_dom"/>
</dbReference>
<dbReference type="InterPro" id="IPR036876">
    <property type="entry name" value="UVR_dom_sf"/>
</dbReference>
<dbReference type="InterPro" id="IPR050066">
    <property type="entry name" value="UvrABC_protein_C"/>
</dbReference>
<dbReference type="InterPro" id="IPR004791">
    <property type="entry name" value="UvrC"/>
</dbReference>
<dbReference type="InterPro" id="IPR001162">
    <property type="entry name" value="UvrC_RNase_H_dom"/>
</dbReference>
<dbReference type="InterPro" id="IPR038476">
    <property type="entry name" value="UvrC_RNase_H_dom_sf"/>
</dbReference>
<dbReference type="NCBIfam" id="NF001824">
    <property type="entry name" value="PRK00558.1-5"/>
    <property type="match status" value="1"/>
</dbReference>
<dbReference type="NCBIfam" id="TIGR00194">
    <property type="entry name" value="uvrC"/>
    <property type="match status" value="1"/>
</dbReference>
<dbReference type="PANTHER" id="PTHR30562:SF1">
    <property type="entry name" value="UVRABC SYSTEM PROTEIN C"/>
    <property type="match status" value="1"/>
</dbReference>
<dbReference type="PANTHER" id="PTHR30562">
    <property type="entry name" value="UVRC/OXIDOREDUCTASE"/>
    <property type="match status" value="1"/>
</dbReference>
<dbReference type="Pfam" id="PF01541">
    <property type="entry name" value="GIY-YIG"/>
    <property type="match status" value="1"/>
</dbReference>
<dbReference type="Pfam" id="PF14520">
    <property type="entry name" value="HHH_5"/>
    <property type="match status" value="1"/>
</dbReference>
<dbReference type="Pfam" id="PF02151">
    <property type="entry name" value="UVR"/>
    <property type="match status" value="1"/>
</dbReference>
<dbReference type="Pfam" id="PF22920">
    <property type="entry name" value="UvrC_RNaseH"/>
    <property type="match status" value="1"/>
</dbReference>
<dbReference type="Pfam" id="PF08459">
    <property type="entry name" value="UvrC_RNaseH_dom"/>
    <property type="match status" value="1"/>
</dbReference>
<dbReference type="SMART" id="SM00465">
    <property type="entry name" value="GIYc"/>
    <property type="match status" value="1"/>
</dbReference>
<dbReference type="SMART" id="SM00278">
    <property type="entry name" value="HhH1"/>
    <property type="match status" value="2"/>
</dbReference>
<dbReference type="SUPFAM" id="SSF46600">
    <property type="entry name" value="C-terminal UvrC-binding domain of UvrB"/>
    <property type="match status" value="1"/>
</dbReference>
<dbReference type="SUPFAM" id="SSF82771">
    <property type="entry name" value="GIY-YIG endonuclease"/>
    <property type="match status" value="1"/>
</dbReference>
<dbReference type="SUPFAM" id="SSF47781">
    <property type="entry name" value="RuvA domain 2-like"/>
    <property type="match status" value="1"/>
</dbReference>
<dbReference type="PROSITE" id="PS50164">
    <property type="entry name" value="GIY_YIG"/>
    <property type="match status" value="1"/>
</dbReference>
<dbReference type="PROSITE" id="PS50151">
    <property type="entry name" value="UVR"/>
    <property type="match status" value="1"/>
</dbReference>
<dbReference type="PROSITE" id="PS50165">
    <property type="entry name" value="UVRC"/>
    <property type="match status" value="1"/>
</dbReference>
<feature type="chain" id="PRO_1000099512" description="UvrABC system protein C">
    <location>
        <begin position="1"/>
        <end position="610"/>
    </location>
</feature>
<feature type="domain" description="GIY-YIG" evidence="1">
    <location>
        <begin position="16"/>
        <end position="94"/>
    </location>
</feature>
<feature type="domain" description="UVR" evidence="1">
    <location>
        <begin position="204"/>
        <end position="239"/>
    </location>
</feature>
<sequence>MSEIFDAKAFLKTVTSQPGVYRMYDAGGTVIYVGKAKDLKKRLSSYFRSNLASRKTEALVAQIQHIDVTVTHTETEALLLEHNYIKLYQPRYNVLLRDDKSYPFIFLSGDTHPRLAMHRGAKHAKGEYFGPFPNGYAVRETLALLQKIFPVRQCENSVYRNRSRPCLQYQIGRCLGPCVAGLVSEEEYAQQVEYVRLFLSGKDDQVLTQLIARMEKASQDLAFEEAARIRDQIQAVRRVTERQFVSNAGDDLDVIGVAFDAGMACVHVLFIRQGKVLGSRSYFPKVPGGTELGEVVETFVGQFYLQGSQMRTLPGEILLDFNLSDKTLLADSLSELAGRRIHVQTKPRGDRARYLKLARTNAATALITKLSQQSTITQRLTALAAVLKLPAIKRMECFDISHTMGEQTVASCVVFDANGPLRAEYRRYNIAGITPGDDYAAMNQVLRRRYGKAIEESKIPDVILIDGGKGQLAQAKAVFAELDVPWDKHRPLLLGVAKGADRKAGLETLFFEPEGEGFSLPPDSPALHVIQHIRDESHDHAIGGHRKKRAKVKNTSTLETIEGVGPKRRQMLLKYMGGLQGLRNASVEEIAKVPGISQGLAEKIFWSLKH</sequence>
<evidence type="ECO:0000255" key="1">
    <source>
        <dbReference type="HAMAP-Rule" id="MF_00203"/>
    </source>
</evidence>
<reference key="1">
    <citation type="journal article" date="2011" name="J. Bacteriol.">
        <title>Comparative genomics of 28 Salmonella enterica isolates: evidence for CRISPR-mediated adaptive sublineage evolution.</title>
        <authorList>
            <person name="Fricke W.F."/>
            <person name="Mammel M.K."/>
            <person name="McDermott P.F."/>
            <person name="Tartera C."/>
            <person name="White D.G."/>
            <person name="Leclerc J.E."/>
            <person name="Ravel J."/>
            <person name="Cebula T.A."/>
        </authorList>
    </citation>
    <scope>NUCLEOTIDE SEQUENCE [LARGE SCALE GENOMIC DNA]</scope>
    <source>
        <strain>CT_02021853</strain>
    </source>
</reference>
<protein>
    <recommendedName>
        <fullName evidence="1">UvrABC system protein C</fullName>
        <shortName evidence="1">Protein UvrC</shortName>
    </recommendedName>
    <alternativeName>
        <fullName evidence="1">Excinuclease ABC subunit C</fullName>
    </alternativeName>
</protein>
<comment type="function">
    <text evidence="1">The UvrABC repair system catalyzes the recognition and processing of DNA lesions. UvrC both incises the 5' and 3' sides of the lesion. The N-terminal half is responsible for the 3' incision and the C-terminal half is responsible for the 5' incision.</text>
</comment>
<comment type="subunit">
    <text evidence="1">Interacts with UvrB in an incision complex.</text>
</comment>
<comment type="subcellular location">
    <subcellularLocation>
        <location evidence="1">Cytoplasm</location>
    </subcellularLocation>
</comment>
<comment type="similarity">
    <text evidence="1">Belongs to the UvrC family.</text>
</comment>
<organism>
    <name type="scientific">Salmonella dublin (strain CT_02021853)</name>
    <dbReference type="NCBI Taxonomy" id="439851"/>
    <lineage>
        <taxon>Bacteria</taxon>
        <taxon>Pseudomonadati</taxon>
        <taxon>Pseudomonadota</taxon>
        <taxon>Gammaproteobacteria</taxon>
        <taxon>Enterobacterales</taxon>
        <taxon>Enterobacteriaceae</taxon>
        <taxon>Salmonella</taxon>
    </lineage>
</organism>
<proteinExistence type="inferred from homology"/>
<name>UVRC_SALDC</name>